<gene>
    <name type="primary">csnk1g1</name>
    <name type="ORF">si:ch211-59b1.2</name>
</gene>
<reference key="1">
    <citation type="journal article" date="2013" name="Nature">
        <title>The zebrafish reference genome sequence and its relationship to the human genome.</title>
        <authorList>
            <person name="Howe K."/>
            <person name="Clark M.D."/>
            <person name="Torroja C.F."/>
            <person name="Torrance J."/>
            <person name="Berthelot C."/>
            <person name="Muffato M."/>
            <person name="Collins J.E."/>
            <person name="Humphray S."/>
            <person name="McLaren K."/>
            <person name="Matthews L."/>
            <person name="McLaren S."/>
            <person name="Sealy I."/>
            <person name="Caccamo M."/>
            <person name="Churcher C."/>
            <person name="Scott C."/>
            <person name="Barrett J.C."/>
            <person name="Koch R."/>
            <person name="Rauch G.J."/>
            <person name="White S."/>
            <person name="Chow W."/>
            <person name="Kilian B."/>
            <person name="Quintais L.T."/>
            <person name="Guerra-Assuncao J.A."/>
            <person name="Zhou Y."/>
            <person name="Gu Y."/>
            <person name="Yen J."/>
            <person name="Vogel J.H."/>
            <person name="Eyre T."/>
            <person name="Redmond S."/>
            <person name="Banerjee R."/>
            <person name="Chi J."/>
            <person name="Fu B."/>
            <person name="Langley E."/>
            <person name="Maguire S.F."/>
            <person name="Laird G.K."/>
            <person name="Lloyd D."/>
            <person name="Kenyon E."/>
            <person name="Donaldson S."/>
            <person name="Sehra H."/>
            <person name="Almeida-King J."/>
            <person name="Loveland J."/>
            <person name="Trevanion S."/>
            <person name="Jones M."/>
            <person name="Quail M."/>
            <person name="Willey D."/>
            <person name="Hunt A."/>
            <person name="Burton J."/>
            <person name="Sims S."/>
            <person name="McLay K."/>
            <person name="Plumb B."/>
            <person name="Davis J."/>
            <person name="Clee C."/>
            <person name="Oliver K."/>
            <person name="Clark R."/>
            <person name="Riddle C."/>
            <person name="Elliot D."/>
            <person name="Threadgold G."/>
            <person name="Harden G."/>
            <person name="Ware D."/>
            <person name="Begum S."/>
            <person name="Mortimore B."/>
            <person name="Kerry G."/>
            <person name="Heath P."/>
            <person name="Phillimore B."/>
            <person name="Tracey A."/>
            <person name="Corby N."/>
            <person name="Dunn M."/>
            <person name="Johnson C."/>
            <person name="Wood J."/>
            <person name="Clark S."/>
            <person name="Pelan S."/>
            <person name="Griffiths G."/>
            <person name="Smith M."/>
            <person name="Glithero R."/>
            <person name="Howden P."/>
            <person name="Barker N."/>
            <person name="Lloyd C."/>
            <person name="Stevens C."/>
            <person name="Harley J."/>
            <person name="Holt K."/>
            <person name="Panagiotidis G."/>
            <person name="Lovell J."/>
            <person name="Beasley H."/>
            <person name="Henderson C."/>
            <person name="Gordon D."/>
            <person name="Auger K."/>
            <person name="Wright D."/>
            <person name="Collins J."/>
            <person name="Raisen C."/>
            <person name="Dyer L."/>
            <person name="Leung K."/>
            <person name="Robertson L."/>
            <person name="Ambridge K."/>
            <person name="Leongamornlert D."/>
            <person name="McGuire S."/>
            <person name="Gilderthorp R."/>
            <person name="Griffiths C."/>
            <person name="Manthravadi D."/>
            <person name="Nichol S."/>
            <person name="Barker G."/>
            <person name="Whitehead S."/>
            <person name="Kay M."/>
            <person name="Brown J."/>
            <person name="Murnane C."/>
            <person name="Gray E."/>
            <person name="Humphries M."/>
            <person name="Sycamore N."/>
            <person name="Barker D."/>
            <person name="Saunders D."/>
            <person name="Wallis J."/>
            <person name="Babbage A."/>
            <person name="Hammond S."/>
            <person name="Mashreghi-Mohammadi M."/>
            <person name="Barr L."/>
            <person name="Martin S."/>
            <person name="Wray P."/>
            <person name="Ellington A."/>
            <person name="Matthews N."/>
            <person name="Ellwood M."/>
            <person name="Woodmansey R."/>
            <person name="Clark G."/>
            <person name="Cooper J."/>
            <person name="Tromans A."/>
            <person name="Grafham D."/>
            <person name="Skuce C."/>
            <person name="Pandian R."/>
            <person name="Andrews R."/>
            <person name="Harrison E."/>
            <person name="Kimberley A."/>
            <person name="Garnett J."/>
            <person name="Fosker N."/>
            <person name="Hall R."/>
            <person name="Garner P."/>
            <person name="Kelly D."/>
            <person name="Bird C."/>
            <person name="Palmer S."/>
            <person name="Gehring I."/>
            <person name="Berger A."/>
            <person name="Dooley C.M."/>
            <person name="Ersan-Urun Z."/>
            <person name="Eser C."/>
            <person name="Geiger H."/>
            <person name="Geisler M."/>
            <person name="Karotki L."/>
            <person name="Kirn A."/>
            <person name="Konantz J."/>
            <person name="Konantz M."/>
            <person name="Oberlander M."/>
            <person name="Rudolph-Geiger S."/>
            <person name="Teucke M."/>
            <person name="Lanz C."/>
            <person name="Raddatz G."/>
            <person name="Osoegawa K."/>
            <person name="Zhu B."/>
            <person name="Rapp A."/>
            <person name="Widaa S."/>
            <person name="Langford C."/>
            <person name="Yang F."/>
            <person name="Schuster S.C."/>
            <person name="Carter N.P."/>
            <person name="Harrow J."/>
            <person name="Ning Z."/>
            <person name="Herrero J."/>
            <person name="Searle S.M."/>
            <person name="Enright A."/>
            <person name="Geisler R."/>
            <person name="Plasterk R.H."/>
            <person name="Lee C."/>
            <person name="Westerfield M."/>
            <person name="de Jong P.J."/>
            <person name="Zon L.I."/>
            <person name="Postlethwait J.H."/>
            <person name="Nusslein-Volhard C."/>
            <person name="Hubbard T.J."/>
            <person name="Roest Crollius H."/>
            <person name="Rogers J."/>
            <person name="Stemple D.L."/>
        </authorList>
    </citation>
    <scope>NUCLEOTIDE SEQUENCE [LARGE SCALE GENOMIC DNA]</scope>
    <source>
        <strain>Tuebingen</strain>
    </source>
</reference>
<reference key="2">
    <citation type="submission" date="2004-12" db="EMBL/GenBank/DDBJ databases">
        <authorList>
            <consortium name="NIH - Zebrafish Gene Collection (ZGC) project"/>
        </authorList>
    </citation>
    <scope>NUCLEOTIDE SEQUENCE [LARGE SCALE MRNA]</scope>
    <source>
        <tissue>Embryo</tissue>
    </source>
</reference>
<name>KC1G1_DANRE</name>
<protein>
    <recommendedName>
        <fullName>Casein kinase I isoform gamma-1</fullName>
        <shortName>CKI-gamma 1</shortName>
        <ecNumber>2.7.11.1</ecNumber>
    </recommendedName>
</protein>
<accession>Q5PRD4</accession>
<dbReference type="EC" id="2.7.11.1"/>
<dbReference type="EMBL" id="AL935050">
    <property type="protein sequence ID" value="CAQ14869.1"/>
    <property type="molecule type" value="Genomic_DNA"/>
</dbReference>
<dbReference type="EMBL" id="BC086705">
    <property type="protein sequence ID" value="AAH86705.1"/>
    <property type="molecule type" value="mRNA"/>
</dbReference>
<dbReference type="RefSeq" id="NP_001008635.1">
    <property type="nucleotide sequence ID" value="NM_001008635.1"/>
</dbReference>
<dbReference type="SMR" id="Q5PRD4"/>
<dbReference type="FunCoup" id="Q5PRD4">
    <property type="interactions" value="1751"/>
</dbReference>
<dbReference type="STRING" id="7955.ENSDARP00000138782"/>
<dbReference type="PaxDb" id="7955-ENSDARP00000047418"/>
<dbReference type="Ensembl" id="ENSDART00000162777">
    <property type="protein sequence ID" value="ENSDARP00000138782"/>
    <property type="gene ID" value="ENSDARG00000104342"/>
</dbReference>
<dbReference type="GeneID" id="494092"/>
<dbReference type="KEGG" id="dre:494092"/>
<dbReference type="AGR" id="ZFIN:ZDB-GENE-041212-63"/>
<dbReference type="CTD" id="53944"/>
<dbReference type="ZFIN" id="ZDB-GENE-041212-63">
    <property type="gene designation" value="csnk1g1"/>
</dbReference>
<dbReference type="eggNOG" id="KOG1165">
    <property type="taxonomic scope" value="Eukaryota"/>
</dbReference>
<dbReference type="HOGENOM" id="CLU_019279_2_0_1"/>
<dbReference type="InParanoid" id="Q5PRD4"/>
<dbReference type="OrthoDB" id="5800476at2759"/>
<dbReference type="PhylomeDB" id="Q5PRD4"/>
<dbReference type="TreeFam" id="TF313349"/>
<dbReference type="SignaLink" id="Q5PRD4"/>
<dbReference type="PRO" id="PR:Q5PRD4"/>
<dbReference type="Proteomes" id="UP000000437">
    <property type="component" value="Chromosome 7"/>
</dbReference>
<dbReference type="Bgee" id="ENSDARG00000104342">
    <property type="expression patterns" value="Expressed in early embryo and 20 other cell types or tissues"/>
</dbReference>
<dbReference type="ExpressionAtlas" id="Q5PRD4">
    <property type="expression patterns" value="baseline"/>
</dbReference>
<dbReference type="GO" id="GO:0005737">
    <property type="term" value="C:cytoplasm"/>
    <property type="evidence" value="ECO:0000318"/>
    <property type="project" value="GO_Central"/>
</dbReference>
<dbReference type="GO" id="GO:0005634">
    <property type="term" value="C:nucleus"/>
    <property type="evidence" value="ECO:0000318"/>
    <property type="project" value="GO_Central"/>
</dbReference>
<dbReference type="GO" id="GO:0005886">
    <property type="term" value="C:plasma membrane"/>
    <property type="evidence" value="ECO:0000318"/>
    <property type="project" value="GO_Central"/>
</dbReference>
<dbReference type="GO" id="GO:0005524">
    <property type="term" value="F:ATP binding"/>
    <property type="evidence" value="ECO:0007669"/>
    <property type="project" value="UniProtKB-KW"/>
</dbReference>
<dbReference type="GO" id="GO:0106310">
    <property type="term" value="F:protein serine kinase activity"/>
    <property type="evidence" value="ECO:0007669"/>
    <property type="project" value="RHEA"/>
</dbReference>
<dbReference type="GO" id="GO:0004674">
    <property type="term" value="F:protein serine/threonine kinase activity"/>
    <property type="evidence" value="ECO:0000318"/>
    <property type="project" value="GO_Central"/>
</dbReference>
<dbReference type="GO" id="GO:0006897">
    <property type="term" value="P:endocytosis"/>
    <property type="evidence" value="ECO:0000318"/>
    <property type="project" value="GO_Central"/>
</dbReference>
<dbReference type="GO" id="GO:0090263">
    <property type="term" value="P:positive regulation of canonical Wnt signaling pathway"/>
    <property type="evidence" value="ECO:0000318"/>
    <property type="project" value="GO_Central"/>
</dbReference>
<dbReference type="GO" id="GO:0007165">
    <property type="term" value="P:signal transduction"/>
    <property type="evidence" value="ECO:0000318"/>
    <property type="project" value="GO_Central"/>
</dbReference>
<dbReference type="GO" id="GO:0016055">
    <property type="term" value="P:Wnt signaling pathway"/>
    <property type="evidence" value="ECO:0007669"/>
    <property type="project" value="UniProtKB-KW"/>
</dbReference>
<dbReference type="CDD" id="cd14126">
    <property type="entry name" value="STKc_CK1_gamma"/>
    <property type="match status" value="1"/>
</dbReference>
<dbReference type="FunFam" id="1.10.510.10:FF:001113">
    <property type="entry name" value="Casein kinase 1 gamma 2"/>
    <property type="match status" value="1"/>
</dbReference>
<dbReference type="FunFam" id="3.30.200.20:FF:000018">
    <property type="entry name" value="Casein kinase I isoform gamma-1"/>
    <property type="match status" value="1"/>
</dbReference>
<dbReference type="Gene3D" id="3.30.200.20">
    <property type="entry name" value="Phosphorylase Kinase, domain 1"/>
    <property type="match status" value="1"/>
</dbReference>
<dbReference type="Gene3D" id="1.10.510.10">
    <property type="entry name" value="Transferase(Phosphotransferase) domain 1"/>
    <property type="match status" value="1"/>
</dbReference>
<dbReference type="InterPro" id="IPR022247">
    <property type="entry name" value="Casein_kinase-1_gamma_C"/>
</dbReference>
<dbReference type="InterPro" id="IPR050235">
    <property type="entry name" value="CK1_Ser-Thr_kinase"/>
</dbReference>
<dbReference type="InterPro" id="IPR011009">
    <property type="entry name" value="Kinase-like_dom_sf"/>
</dbReference>
<dbReference type="InterPro" id="IPR000719">
    <property type="entry name" value="Prot_kinase_dom"/>
</dbReference>
<dbReference type="InterPro" id="IPR017441">
    <property type="entry name" value="Protein_kinase_ATP_BS"/>
</dbReference>
<dbReference type="InterPro" id="IPR008271">
    <property type="entry name" value="Ser/Thr_kinase_AS"/>
</dbReference>
<dbReference type="PANTHER" id="PTHR11909">
    <property type="entry name" value="CASEIN KINASE-RELATED"/>
    <property type="match status" value="1"/>
</dbReference>
<dbReference type="Pfam" id="PF12605">
    <property type="entry name" value="CK1gamma_C"/>
    <property type="match status" value="2"/>
</dbReference>
<dbReference type="Pfam" id="PF00069">
    <property type="entry name" value="Pkinase"/>
    <property type="match status" value="1"/>
</dbReference>
<dbReference type="SMART" id="SM00220">
    <property type="entry name" value="S_TKc"/>
    <property type="match status" value="1"/>
</dbReference>
<dbReference type="SUPFAM" id="SSF56112">
    <property type="entry name" value="Protein kinase-like (PK-like)"/>
    <property type="match status" value="1"/>
</dbReference>
<dbReference type="PROSITE" id="PS00107">
    <property type="entry name" value="PROTEIN_KINASE_ATP"/>
    <property type="match status" value="1"/>
</dbReference>
<dbReference type="PROSITE" id="PS50011">
    <property type="entry name" value="PROTEIN_KINASE_DOM"/>
    <property type="match status" value="1"/>
</dbReference>
<dbReference type="PROSITE" id="PS00108">
    <property type="entry name" value="PROTEIN_KINASE_ST"/>
    <property type="match status" value="1"/>
</dbReference>
<keyword id="KW-0067">ATP-binding</keyword>
<keyword id="KW-0963">Cytoplasm</keyword>
<keyword id="KW-0418">Kinase</keyword>
<keyword id="KW-0547">Nucleotide-binding</keyword>
<keyword id="KW-1185">Reference proteome</keyword>
<keyword id="KW-0723">Serine/threonine-protein kinase</keyword>
<keyword id="KW-0808">Transferase</keyword>
<keyword id="KW-0879">Wnt signaling pathway</keyword>
<sequence length="421" mass="48282">MDHPREKEADRPVRSSKVPQGRSGHSRPSSSSASSGVLMVGPNFRVGKKIGCGNFGELKLGKNLYTNEYVAIKLEPVKSRAPQLHLEYRFYKTLGSADGLPQVFYFGPCGKYNAMVLELLGPSLEDLFDLCDRTFSLKTVLMIAIQLISRMEYVHSKNLIYRDVKPENFLIGRQGNKKEHIIHIIDFGLAKEYIDPETKKHIPYREHKSLTGTARYMSINTHLGKEQSRRDDLEALGHMFMYFLRGSLPWQGLKADTLKERYQKIGDTKRNTPIEVLCENFPEEMATYLRYVRRLDFFEKPDYDYLRNLFTELFDRKGYAFDYSYDWVGRQIPTPVGTVHVDSGASAITRESHAHRDRPSQHQPLRNQVVSSTNGELNADDPLAAHSNAPITAQAEVEVVDEAKCCCFFKRKRKKNTPRHK</sequence>
<feature type="chain" id="PRO_0000364344" description="Casein kinase I isoform gamma-1">
    <location>
        <begin position="1"/>
        <end position="421"/>
    </location>
</feature>
<feature type="domain" description="Protein kinase" evidence="2">
    <location>
        <begin position="44"/>
        <end position="314"/>
    </location>
</feature>
<feature type="region of interest" description="Disordered" evidence="4">
    <location>
        <begin position="1"/>
        <end position="36"/>
    </location>
</feature>
<feature type="compositionally biased region" description="Basic and acidic residues" evidence="4">
    <location>
        <begin position="1"/>
        <end position="13"/>
    </location>
</feature>
<feature type="compositionally biased region" description="Low complexity" evidence="4">
    <location>
        <begin position="21"/>
        <end position="36"/>
    </location>
</feature>
<feature type="active site" description="Proton acceptor" evidence="2 3">
    <location>
        <position position="163"/>
    </location>
</feature>
<feature type="binding site" evidence="2">
    <location>
        <begin position="50"/>
        <end position="58"/>
    </location>
    <ligand>
        <name>ATP</name>
        <dbReference type="ChEBI" id="CHEBI:30616"/>
    </ligand>
</feature>
<feature type="binding site" evidence="2">
    <location>
        <position position="73"/>
    </location>
    <ligand>
        <name>ATP</name>
        <dbReference type="ChEBI" id="CHEBI:30616"/>
    </ligand>
</feature>
<evidence type="ECO:0000250" key="1"/>
<evidence type="ECO:0000255" key="2">
    <source>
        <dbReference type="PROSITE-ProRule" id="PRU00159"/>
    </source>
</evidence>
<evidence type="ECO:0000255" key="3">
    <source>
        <dbReference type="PROSITE-ProRule" id="PRU10027"/>
    </source>
</evidence>
<evidence type="ECO:0000256" key="4">
    <source>
        <dbReference type="SAM" id="MobiDB-lite"/>
    </source>
</evidence>
<evidence type="ECO:0000305" key="5"/>
<comment type="function">
    <text evidence="1">Casein kinases are operationally defined by their preferential utilization of acidic proteins such as caseins as substrates. It can phosphorylate a large number of proteins. Participates in Wnt signaling (By similarity).</text>
</comment>
<comment type="catalytic activity">
    <reaction>
        <text>L-seryl-[protein] + ATP = O-phospho-L-seryl-[protein] + ADP + H(+)</text>
        <dbReference type="Rhea" id="RHEA:17989"/>
        <dbReference type="Rhea" id="RHEA-COMP:9863"/>
        <dbReference type="Rhea" id="RHEA-COMP:11604"/>
        <dbReference type="ChEBI" id="CHEBI:15378"/>
        <dbReference type="ChEBI" id="CHEBI:29999"/>
        <dbReference type="ChEBI" id="CHEBI:30616"/>
        <dbReference type="ChEBI" id="CHEBI:83421"/>
        <dbReference type="ChEBI" id="CHEBI:456216"/>
        <dbReference type="EC" id="2.7.11.1"/>
    </reaction>
</comment>
<comment type="catalytic activity">
    <reaction>
        <text>L-threonyl-[protein] + ATP = O-phospho-L-threonyl-[protein] + ADP + H(+)</text>
        <dbReference type="Rhea" id="RHEA:46608"/>
        <dbReference type="Rhea" id="RHEA-COMP:11060"/>
        <dbReference type="Rhea" id="RHEA-COMP:11605"/>
        <dbReference type="ChEBI" id="CHEBI:15378"/>
        <dbReference type="ChEBI" id="CHEBI:30013"/>
        <dbReference type="ChEBI" id="CHEBI:30616"/>
        <dbReference type="ChEBI" id="CHEBI:61977"/>
        <dbReference type="ChEBI" id="CHEBI:456216"/>
        <dbReference type="EC" id="2.7.11.1"/>
    </reaction>
</comment>
<comment type="subcellular location">
    <subcellularLocation>
        <location evidence="1">Cytoplasm</location>
    </subcellularLocation>
</comment>
<comment type="PTM">
    <text evidence="1">Autophosphorylated.</text>
</comment>
<comment type="similarity">
    <text evidence="5">Belongs to the protein kinase superfamily. CK1 Ser/Thr protein kinase family. Casein kinase I subfamily.</text>
</comment>
<organism>
    <name type="scientific">Danio rerio</name>
    <name type="common">Zebrafish</name>
    <name type="synonym">Brachydanio rerio</name>
    <dbReference type="NCBI Taxonomy" id="7955"/>
    <lineage>
        <taxon>Eukaryota</taxon>
        <taxon>Metazoa</taxon>
        <taxon>Chordata</taxon>
        <taxon>Craniata</taxon>
        <taxon>Vertebrata</taxon>
        <taxon>Euteleostomi</taxon>
        <taxon>Actinopterygii</taxon>
        <taxon>Neopterygii</taxon>
        <taxon>Teleostei</taxon>
        <taxon>Ostariophysi</taxon>
        <taxon>Cypriniformes</taxon>
        <taxon>Danionidae</taxon>
        <taxon>Danioninae</taxon>
        <taxon>Danio</taxon>
    </lineage>
</organism>
<proteinExistence type="evidence at transcript level"/>